<protein>
    <recommendedName>
        <fullName evidence="4">Scorpine-like-1</fullName>
        <shortName evidence="6">SCl1</shortName>
        <shortName evidence="4">UySCl1</shortName>
    </recommendedName>
</protein>
<reference key="1">
    <citation type="journal article" date="2013" name="Toxicon">
        <title>Characterization of the venom from the Australian scorpion Urodacus yaschenkoi: molecular mass analysis of components, cDNA sequences and peptides with antimicrobial activity.</title>
        <authorList>
            <person name="Luna-Ramirez K."/>
            <person name="Quintero-Hernandez V."/>
            <person name="Vargas-Jaimes L."/>
            <person name="Batista C.V."/>
            <person name="Winkel K.D."/>
            <person name="Possani L.D."/>
        </authorList>
    </citation>
    <scope>NUCLEOTIDE SEQUENCE [MRNA]</scope>
    <source>
        <tissue>Venom gland</tissue>
    </source>
</reference>
<evidence type="ECO:0000250" key="1">
    <source>
        <dbReference type="UniProtKB" id="P56972"/>
    </source>
</evidence>
<evidence type="ECO:0000255" key="2"/>
<evidence type="ECO:0000255" key="3">
    <source>
        <dbReference type="PROSITE-ProRule" id="PRU01209"/>
    </source>
</evidence>
<evidence type="ECO:0000303" key="4">
    <source>
    </source>
</evidence>
<evidence type="ECO:0000305" key="5"/>
<evidence type="ECO:0000305" key="6">
    <source>
    </source>
</evidence>
<accession>L0G8Z0</accession>
<organism>
    <name type="scientific">Urodacus yaschenkoi</name>
    <name type="common">Inland robust scorpion</name>
    <dbReference type="NCBI Taxonomy" id="1273102"/>
    <lineage>
        <taxon>Eukaryota</taxon>
        <taxon>Metazoa</taxon>
        <taxon>Ecdysozoa</taxon>
        <taxon>Arthropoda</taxon>
        <taxon>Chelicerata</taxon>
        <taxon>Arachnida</taxon>
        <taxon>Scorpiones</taxon>
        <taxon>Iurida</taxon>
        <taxon>Scorpionoidea</taxon>
        <taxon>Scorpionidae</taxon>
        <taxon>Urodacinae</taxon>
        <taxon>Urodacus</taxon>
    </lineage>
</organism>
<name>KBX31_UROYA</name>
<comment type="function">
    <text evidence="1">Has antibacterial activity.</text>
</comment>
<comment type="subcellular location">
    <subcellularLocation>
        <location evidence="6">Secreted</location>
    </subcellularLocation>
</comment>
<comment type="tissue specificity">
    <text evidence="6">Expressed by the venom gland.</text>
</comment>
<comment type="similarity">
    <text evidence="5">Belongs to the long chain scorpion toxin family. Class 3 subfamily.</text>
</comment>
<sequence length="94" mass="10642">MNTKFTVLIFLGVIVVSYGWITEKKIQKVLDEKLPNGFIKGAAKAVVHKLAKSEYGCMMDISWNKDCQRHCQSTEQKDGICHGMKCKCGKPRSY</sequence>
<keyword id="KW-0044">Antibiotic</keyword>
<keyword id="KW-0929">Antimicrobial</keyword>
<keyword id="KW-1015">Disulfide bond</keyword>
<keyword id="KW-0295">Fungicide</keyword>
<keyword id="KW-0964">Secreted</keyword>
<keyword id="KW-0732">Signal</keyword>
<keyword id="KW-0800">Toxin</keyword>
<dbReference type="EMBL" id="JX274244">
    <property type="protein sequence ID" value="AGA82758.1"/>
    <property type="molecule type" value="mRNA"/>
</dbReference>
<dbReference type="SMR" id="L0G8Z0"/>
<dbReference type="GO" id="GO:0005576">
    <property type="term" value="C:extracellular region"/>
    <property type="evidence" value="ECO:0007669"/>
    <property type="project" value="UniProtKB-SubCell"/>
</dbReference>
<dbReference type="GO" id="GO:0090729">
    <property type="term" value="F:toxin activity"/>
    <property type="evidence" value="ECO:0007669"/>
    <property type="project" value="UniProtKB-KW"/>
</dbReference>
<dbReference type="GO" id="GO:0042742">
    <property type="term" value="P:defense response to bacterium"/>
    <property type="evidence" value="ECO:0007669"/>
    <property type="project" value="UniProtKB-KW"/>
</dbReference>
<dbReference type="GO" id="GO:0050832">
    <property type="term" value="P:defense response to fungus"/>
    <property type="evidence" value="ECO:0007669"/>
    <property type="project" value="UniProtKB-KW"/>
</dbReference>
<dbReference type="GO" id="GO:0031640">
    <property type="term" value="P:killing of cells of another organism"/>
    <property type="evidence" value="ECO:0007669"/>
    <property type="project" value="UniProtKB-KW"/>
</dbReference>
<dbReference type="InterPro" id="IPR029237">
    <property type="entry name" value="Long_scorpion_toxin_alpha/beta"/>
</dbReference>
<dbReference type="Pfam" id="PF14866">
    <property type="entry name" value="Scorpion_toxin_alpha-beta"/>
    <property type="match status" value="1"/>
</dbReference>
<dbReference type="PROSITE" id="PS51862">
    <property type="entry name" value="BSPN_CSAB"/>
    <property type="match status" value="1"/>
</dbReference>
<feature type="signal peptide" evidence="2">
    <location>
        <begin position="1"/>
        <end position="18"/>
    </location>
</feature>
<feature type="chain" id="PRO_5001091930" description="Scorpine-like-1" evidence="6">
    <location>
        <begin position="19"/>
        <end position="94"/>
    </location>
</feature>
<feature type="domain" description="BetaSPN-type CS-alpha/beta" evidence="3">
    <location>
        <begin position="54"/>
        <end position="94"/>
    </location>
</feature>
<feature type="disulfide bond" evidence="3">
    <location>
        <begin position="57"/>
        <end position="81"/>
    </location>
</feature>
<feature type="disulfide bond" evidence="3">
    <location>
        <begin position="67"/>
        <end position="86"/>
    </location>
</feature>
<feature type="disulfide bond" evidence="3">
    <location>
        <begin position="71"/>
        <end position="88"/>
    </location>
</feature>
<proteinExistence type="inferred from homology"/>